<evidence type="ECO:0000255" key="1"/>
<evidence type="ECO:0000255" key="2">
    <source>
        <dbReference type="PROSITE-ProRule" id="PRU00498"/>
    </source>
</evidence>
<evidence type="ECO:0000269" key="3">
    <source>
    </source>
</evidence>
<evidence type="ECO:0000303" key="4">
    <source>
    </source>
</evidence>
<evidence type="ECO:0000305" key="5"/>
<evidence type="ECO:0000305" key="6">
    <source>
    </source>
</evidence>
<evidence type="ECO:0000312" key="7">
    <source>
        <dbReference type="EMBL" id="ONM26599.1"/>
    </source>
</evidence>
<proteinExistence type="evidence at protein level"/>
<feature type="signal peptide" evidence="1">
    <location>
        <begin position="1"/>
        <end position="24"/>
    </location>
</feature>
<feature type="chain" id="PRO_0000457873" description="Disease resistance protein BAK6" evidence="1">
    <location>
        <begin position="25"/>
        <end position="247"/>
    </location>
</feature>
<feature type="repeat" description="LRR 1" evidence="1">
    <location>
        <begin position="90"/>
        <end position="114"/>
    </location>
</feature>
<feature type="repeat" description="LRR 2" evidence="1">
    <location>
        <begin position="116"/>
        <end position="138"/>
    </location>
</feature>
<feature type="repeat" description="LRR 3" evidence="1">
    <location>
        <begin position="139"/>
        <end position="161"/>
    </location>
</feature>
<feature type="repeat" description="LRR 4" evidence="1">
    <location>
        <begin position="162"/>
        <end position="186"/>
    </location>
</feature>
<feature type="repeat" description="LRR 5" evidence="1">
    <location>
        <begin position="188"/>
        <end position="210"/>
    </location>
</feature>
<feature type="repeat" description="LRR 6" evidence="1">
    <location>
        <begin position="213"/>
        <end position="237"/>
    </location>
</feature>
<feature type="glycosylation site" description="N-linked (GlcNAc...) asparagine" evidence="2">
    <location>
        <position position="66"/>
    </location>
</feature>
<feature type="glycosylation site" description="N-linked (GlcNAc...) asparagine" evidence="2">
    <location>
        <position position="104"/>
    </location>
</feature>
<feature type="glycosylation site" description="N-linked (GlcNAc...) asparagine" evidence="2">
    <location>
        <position position="113"/>
    </location>
</feature>
<feature type="glycosylation site" description="N-linked (GlcNAc...) asparagine" evidence="2">
    <location>
        <position position="150"/>
    </location>
</feature>
<feature type="glycosylation site" description="N-linked (GlcNAc...) asparagine" evidence="2">
    <location>
        <position position="161"/>
    </location>
</feature>
<feature type="glycosylation site" description="N-linked (GlcNAc...) asparagine" evidence="2">
    <location>
        <position position="215"/>
    </location>
</feature>
<comment type="function">
    <text evidence="3 6">Contributes to activation of the hypersensitive response, a form of programmed cell death, upon fungal infection (PubMed:36577386). May sense the presence of fungal material and relay the signal to WAK17 isoform 1 (Probable).</text>
</comment>
<comment type="subunit">
    <text evidence="3">Interacts with WAK17 isoform 1; the interaction is direct.</text>
</comment>
<comment type="subunit">
    <text evidence="3">(Microbial infection) Interacts with G.zeae CFEM1; the interaction is direct (PubMed:36577386). Interacts with G.zeae CFEMN1; the interaction is direct (PubMed:36577386). Interacts with G.zeae CFEM5; the interaction is direct (PubMed:36577386).</text>
</comment>
<comment type="induction">
    <text evidence="3">Induced in stalks during infection with G.zeae.</text>
</comment>
<protein>
    <recommendedName>
        <fullName evidence="5">Disease resistance protein BAK6</fullName>
    </recommendedName>
    <alternativeName>
        <fullName evidence="5">Brassinosteroid insensitive 1-associated receptor kinase like 6</fullName>
        <shortName evidence="5">BRI1-associated receptor kinase 6</shortName>
    </alternativeName>
    <alternativeName>
        <fullName evidence="5">Leucine-rich repeat protein 5</fullName>
        <shortName evidence="4">ZmLRR5</shortName>
    </alternativeName>
</protein>
<sequence length="247" mass="26465">MAAVQFAAAGVLTGLLALATLASCNTDGDILYKQRLAWEDPNNVLQSWDPTLANPCTWFHVTCNLNNSVIRVDLGKAGISGPLLPDLGALESLQYMELFGNSLNGSIPSTLGNLTDLISLDLWDNLLTGPIPTTLGSISTLRYLRLYENNLTGPIPPSFGNLTSLLELKLHRNSLSGSIPASLGNIKSLQFLKLNENMLTGTVPLEVLSLVVVGNLTELNIARNNLDGTVRSSGLRVTAVIQDMRIA</sequence>
<dbReference type="EMBL" id="CM007648">
    <property type="protein sequence ID" value="ONM26599.1"/>
    <property type="molecule type" value="Genomic_DNA"/>
</dbReference>
<dbReference type="SMR" id="A0A1D6F5N5"/>
<dbReference type="FunCoup" id="A0A1D6F5N5">
    <property type="interactions" value="1"/>
</dbReference>
<dbReference type="STRING" id="4577.A0A1D6F5N5"/>
<dbReference type="PaxDb" id="4577-GRMZM2G015933_P01"/>
<dbReference type="GeneID" id="103648015"/>
<dbReference type="KEGG" id="zma:103648015"/>
<dbReference type="eggNOG" id="KOG0619">
    <property type="taxonomic scope" value="Eukaryota"/>
</dbReference>
<dbReference type="InParanoid" id="A0A1D6F5N5"/>
<dbReference type="OMA" id="TVHHANQ"/>
<dbReference type="OrthoDB" id="406235at2759"/>
<dbReference type="Proteomes" id="UP000007305">
    <property type="component" value="Unplaced"/>
</dbReference>
<dbReference type="ExpressionAtlas" id="A0A1D6F5N5">
    <property type="expression patterns" value="baseline and differential"/>
</dbReference>
<dbReference type="GO" id="GO:0009897">
    <property type="term" value="C:external side of plasma membrane"/>
    <property type="evidence" value="ECO:0000314"/>
    <property type="project" value="UniProtKB"/>
</dbReference>
<dbReference type="GO" id="GO:0009603">
    <property type="term" value="P:detection of symbiotic fungus"/>
    <property type="evidence" value="ECO:0000315"/>
    <property type="project" value="UniProtKB"/>
</dbReference>
<dbReference type="GO" id="GO:0045087">
    <property type="term" value="P:innate immune response"/>
    <property type="evidence" value="ECO:0000315"/>
    <property type="project" value="UniProtKB"/>
</dbReference>
<dbReference type="GO" id="GO:0034052">
    <property type="term" value="P:positive regulation of plant-type hypersensitive response"/>
    <property type="evidence" value="ECO:0000315"/>
    <property type="project" value="UniProtKB"/>
</dbReference>
<dbReference type="FunFam" id="3.80.10.10:FF:000864">
    <property type="entry name" value="BRASSINOSTEROID INSENSITIVE 1-associated receptor kinase 1, putative, expressed"/>
    <property type="match status" value="1"/>
</dbReference>
<dbReference type="FunFam" id="3.80.10.10:FF:000024">
    <property type="entry name" value="Somatic embryogenesis receptor kinase 1"/>
    <property type="match status" value="1"/>
</dbReference>
<dbReference type="Gene3D" id="3.80.10.10">
    <property type="entry name" value="Ribonuclease Inhibitor"/>
    <property type="match status" value="2"/>
</dbReference>
<dbReference type="InterPro" id="IPR032675">
    <property type="entry name" value="LRR_dom_sf"/>
</dbReference>
<dbReference type="InterPro" id="IPR013210">
    <property type="entry name" value="LRR_N_plant-typ"/>
</dbReference>
<dbReference type="InterPro" id="IPR055414">
    <property type="entry name" value="LRR_R13L4/SHOC2-like"/>
</dbReference>
<dbReference type="PANTHER" id="PTHR47988">
    <property type="entry name" value="SOMATIC EMBRYOGENESIS RECEPTOR KINASE 1"/>
    <property type="match status" value="1"/>
</dbReference>
<dbReference type="Pfam" id="PF23598">
    <property type="entry name" value="LRR_14"/>
    <property type="match status" value="1"/>
</dbReference>
<dbReference type="Pfam" id="PF08263">
    <property type="entry name" value="LRRNT_2"/>
    <property type="match status" value="1"/>
</dbReference>
<dbReference type="SUPFAM" id="SSF52058">
    <property type="entry name" value="L domain-like"/>
    <property type="match status" value="1"/>
</dbReference>
<accession>A0A1D6F5N5</accession>
<accession>A0A804MUT7</accession>
<reference evidence="7" key="1">
    <citation type="submission" date="2015-12" db="EMBL/GenBank/DDBJ databases">
        <title>Update maize B73 reference genome by single molecule sequencing technologies.</title>
        <authorList>
            <consortium name="Maize Genome Sequencing Project"/>
            <person name="Ware D."/>
        </authorList>
    </citation>
    <scope>NUCLEOTIDE SEQUENCE [LARGE SCALE GENOMIC DNA]</scope>
    <source>
        <strain>cv. B73</strain>
        <tissue evidence="7">Seedling</tissue>
    </source>
</reference>
<reference evidence="5" key="2">
    <citation type="journal article" date="2022" name="Cell Rep.">
        <title>Fungal CFEM effectors negatively regulate a maize wall-associated kinase by interacting with its alternatively spliced variant to dampen resistance.</title>
        <authorList>
            <person name="Zuo N."/>
            <person name="Bai W.Z."/>
            <person name="Wei W.Q."/>
            <person name="Yuan T.L."/>
            <person name="Zhang D."/>
            <person name="Wang Y.Z."/>
            <person name="Tang W.H."/>
        </authorList>
    </citation>
    <scope>FUNCTION</scope>
    <scope>INTERACTION WITH WAK17 ISOFORM 1</scope>
    <scope>INTERACTION (MICROBIAL INFECTION) WITH G.ZEAE CFEM1; G.ZEAE CFEMN1 AND G.ZEAE CFEM5</scope>
    <scope>INDUCTION</scope>
</reference>
<organism evidence="7">
    <name type="scientific">Zea mays</name>
    <name type="common">Maize</name>
    <dbReference type="NCBI Taxonomy" id="4577"/>
    <lineage>
        <taxon>Eukaryota</taxon>
        <taxon>Viridiplantae</taxon>
        <taxon>Streptophyta</taxon>
        <taxon>Embryophyta</taxon>
        <taxon>Tracheophyta</taxon>
        <taxon>Spermatophyta</taxon>
        <taxon>Magnoliopsida</taxon>
        <taxon>Liliopsida</taxon>
        <taxon>Poales</taxon>
        <taxon>Poaceae</taxon>
        <taxon>PACMAD clade</taxon>
        <taxon>Panicoideae</taxon>
        <taxon>Andropogonodae</taxon>
        <taxon>Andropogoneae</taxon>
        <taxon>Tripsacinae</taxon>
        <taxon>Zea</taxon>
    </lineage>
</organism>
<name>LRR5_MAIZE</name>
<gene>
    <name evidence="5" type="primary">BAK6</name>
    <name evidence="5" type="synonym">LRR5</name>
    <name evidence="7" type="ORF">ZEAMMB73_Zm00001d007363</name>
</gene>
<keyword id="KW-0325">Glycoprotein</keyword>
<keyword id="KW-0433">Leucine-rich repeat</keyword>
<keyword id="KW-0675">Receptor</keyword>
<keyword id="KW-1185">Reference proteome</keyword>
<keyword id="KW-0677">Repeat</keyword>
<keyword id="KW-0732">Signal</keyword>